<organism>
    <name type="scientific">Archaeoglobus fulgidus (strain ATCC 49558 / DSM 4304 / JCM 9628 / NBRC 100126 / VC-16)</name>
    <dbReference type="NCBI Taxonomy" id="224325"/>
    <lineage>
        <taxon>Archaea</taxon>
        <taxon>Methanobacteriati</taxon>
        <taxon>Methanobacteriota</taxon>
        <taxon>Archaeoglobi</taxon>
        <taxon>Archaeoglobales</taxon>
        <taxon>Archaeoglobaceae</taxon>
        <taxon>Archaeoglobus</taxon>
    </lineage>
</organism>
<keyword id="KW-0175">Coiled coil</keyword>
<keyword id="KW-1185">Reference proteome</keyword>
<gene>
    <name type="ordered locus">AF_1053</name>
</gene>
<accession>O29209</accession>
<name>Y1053_ARCFU</name>
<sequence length="269" mass="30225">MDVDQAAIDEILASAEADTAEGRIDRLEKELDVLKGSVKKLLLDLRETLNNLENPFQNLQNLAEGALAGGASYQPPQIQVVPAQIPEPPKPEPEVEQPETETGPEPEPEAEPELKEVKEDEPPEEDVVRELDESKSAEPIPEVMEEVDLEGDSLQAYSFEKPVKRTTPKTADLITKYDIVTLFNLMEWVKGMLEKYNLDSLTLMLELFESAGYISKDARDFICKIAELVSLNDGFEDMLLELYRLHKLMNPADTSMDSKLLSLILDKRL</sequence>
<feature type="chain" id="PRO_0000127955" description="Uncharacterized protein AF_1053">
    <location>
        <begin position="1"/>
        <end position="269"/>
    </location>
</feature>
<feature type="region of interest" description="Disordered" evidence="2">
    <location>
        <begin position="83"/>
        <end position="142"/>
    </location>
</feature>
<feature type="coiled-coil region" evidence="1">
    <location>
        <begin position="3"/>
        <end position="66"/>
    </location>
</feature>
<feature type="compositionally biased region" description="Acidic residues" evidence="2">
    <location>
        <begin position="94"/>
        <end position="111"/>
    </location>
</feature>
<feature type="compositionally biased region" description="Basic and acidic residues" evidence="2">
    <location>
        <begin position="112"/>
        <end position="136"/>
    </location>
</feature>
<protein>
    <recommendedName>
        <fullName>Uncharacterized protein AF_1053</fullName>
    </recommendedName>
</protein>
<dbReference type="EMBL" id="AE000782">
    <property type="protein sequence ID" value="AAB90192.1"/>
    <property type="molecule type" value="Genomic_DNA"/>
</dbReference>
<dbReference type="PIR" id="E69381">
    <property type="entry name" value="E69381"/>
</dbReference>
<dbReference type="RefSeq" id="WP_010878553.1">
    <property type="nucleotide sequence ID" value="NC_000917.1"/>
</dbReference>
<dbReference type="SMR" id="O29209"/>
<dbReference type="STRING" id="224325.AF_1053"/>
<dbReference type="PaxDb" id="224325-AF_1053"/>
<dbReference type="EnsemblBacteria" id="AAB90192">
    <property type="protein sequence ID" value="AAB90192"/>
    <property type="gene ID" value="AF_1053"/>
</dbReference>
<dbReference type="GeneID" id="1484276"/>
<dbReference type="KEGG" id="afu:AF_1053"/>
<dbReference type="eggNOG" id="arCOG02396">
    <property type="taxonomic scope" value="Archaea"/>
</dbReference>
<dbReference type="HOGENOM" id="CLU_081492_0_0_2"/>
<dbReference type="OrthoDB" id="142358at2157"/>
<dbReference type="Proteomes" id="UP000002199">
    <property type="component" value="Chromosome"/>
</dbReference>
<reference key="1">
    <citation type="journal article" date="1997" name="Nature">
        <title>The complete genome sequence of the hyperthermophilic, sulphate-reducing archaeon Archaeoglobus fulgidus.</title>
        <authorList>
            <person name="Klenk H.-P."/>
            <person name="Clayton R.A."/>
            <person name="Tomb J.-F."/>
            <person name="White O."/>
            <person name="Nelson K.E."/>
            <person name="Ketchum K.A."/>
            <person name="Dodson R.J."/>
            <person name="Gwinn M.L."/>
            <person name="Hickey E.K."/>
            <person name="Peterson J.D."/>
            <person name="Richardson D.L."/>
            <person name="Kerlavage A.R."/>
            <person name="Graham D.E."/>
            <person name="Kyrpides N.C."/>
            <person name="Fleischmann R.D."/>
            <person name="Quackenbush J."/>
            <person name="Lee N.H."/>
            <person name="Sutton G.G."/>
            <person name="Gill S.R."/>
            <person name="Kirkness E.F."/>
            <person name="Dougherty B.A."/>
            <person name="McKenney K."/>
            <person name="Adams M.D."/>
            <person name="Loftus B.J."/>
            <person name="Peterson S.N."/>
            <person name="Reich C.I."/>
            <person name="McNeil L.K."/>
            <person name="Badger J.H."/>
            <person name="Glodek A."/>
            <person name="Zhou L."/>
            <person name="Overbeek R."/>
            <person name="Gocayne J.D."/>
            <person name="Weidman J.F."/>
            <person name="McDonald L.A."/>
            <person name="Utterback T.R."/>
            <person name="Cotton M.D."/>
            <person name="Spriggs T."/>
            <person name="Artiach P."/>
            <person name="Kaine B.P."/>
            <person name="Sykes S.M."/>
            <person name="Sadow P.W."/>
            <person name="D'Andrea K.P."/>
            <person name="Bowman C."/>
            <person name="Fujii C."/>
            <person name="Garland S.A."/>
            <person name="Mason T.M."/>
            <person name="Olsen G.J."/>
            <person name="Fraser C.M."/>
            <person name="Smith H.O."/>
            <person name="Woese C.R."/>
            <person name="Venter J.C."/>
        </authorList>
    </citation>
    <scope>NUCLEOTIDE SEQUENCE [LARGE SCALE GENOMIC DNA]</scope>
    <source>
        <strain>ATCC 49558 / DSM 4304 / JCM 9628 / NBRC 100126 / VC-16</strain>
    </source>
</reference>
<proteinExistence type="predicted"/>
<evidence type="ECO:0000255" key="1"/>
<evidence type="ECO:0000256" key="2">
    <source>
        <dbReference type="SAM" id="MobiDB-lite"/>
    </source>
</evidence>